<feature type="chain" id="PRO_0000054251" description="Putrescine transporter PotE">
    <location>
        <begin position="1"/>
        <end position="439"/>
    </location>
</feature>
<feature type="transmembrane region" description="Helical" evidence="1">
    <location>
        <begin position="10"/>
        <end position="30"/>
    </location>
</feature>
<feature type="transmembrane region" description="Helical" evidence="1">
    <location>
        <begin position="40"/>
        <end position="60"/>
    </location>
</feature>
<feature type="transmembrane region" description="Helical" evidence="1">
    <location>
        <begin position="91"/>
        <end position="111"/>
    </location>
</feature>
<feature type="transmembrane region" description="Helical" evidence="1">
    <location>
        <begin position="114"/>
        <end position="134"/>
    </location>
</feature>
<feature type="transmembrane region" description="Helical" evidence="1">
    <location>
        <begin position="152"/>
        <end position="172"/>
    </location>
</feature>
<feature type="transmembrane region" description="Helical" evidence="1">
    <location>
        <begin position="186"/>
        <end position="206"/>
    </location>
</feature>
<feature type="transmembrane region" description="Helical" evidence="1">
    <location>
        <begin position="225"/>
        <end position="245"/>
    </location>
</feature>
<feature type="transmembrane region" description="Helical" evidence="1">
    <location>
        <begin position="276"/>
        <end position="296"/>
    </location>
</feature>
<feature type="transmembrane region" description="Helical" evidence="1">
    <location>
        <begin position="321"/>
        <end position="341"/>
    </location>
</feature>
<feature type="transmembrane region" description="Helical" evidence="1">
    <location>
        <begin position="354"/>
        <end position="374"/>
    </location>
</feature>
<feature type="transmembrane region" description="Helical" evidence="1">
    <location>
        <begin position="387"/>
        <end position="407"/>
    </location>
</feature>
<feature type="transmembrane region" description="Helical" evidence="1">
    <location>
        <begin position="410"/>
        <end position="430"/>
    </location>
</feature>
<gene>
    <name evidence="1" type="primary">potE</name>
    <name type="ordered locus">c0776</name>
</gene>
<accession>P0AAF2</accession>
<accession>P24170</accession>
<protein>
    <recommendedName>
        <fullName evidence="1">Putrescine transporter PotE</fullName>
    </recommendedName>
    <alternativeName>
        <fullName evidence="1">Putrescine-proton symporter / putrescine-ornithine antiporter</fullName>
    </alternativeName>
</protein>
<keyword id="KW-0029">Amino-acid transport</keyword>
<keyword id="KW-0050">Antiport</keyword>
<keyword id="KW-0997">Cell inner membrane</keyword>
<keyword id="KW-1003">Cell membrane</keyword>
<keyword id="KW-0472">Membrane</keyword>
<keyword id="KW-1185">Reference proteome</keyword>
<keyword id="KW-0769">Symport</keyword>
<keyword id="KW-0812">Transmembrane</keyword>
<keyword id="KW-1133">Transmembrane helix</keyword>
<keyword id="KW-0813">Transport</keyword>
<sequence length="439" mass="46495">MSQAKSNKMGVVQLTILTMVNMMGSGIIMLPTKLAEVGTISIISWLVTAVGSMALAWAFAKCGMFSRKSGGMGGYAEYAFGKSGNFMANYTYGVSLLIANVAIAISAVGYGTELLGASLSPVQIGLATIGVLWICTVANFGGARITGQISSITVWGVIIPVVGLCIIGWFWFSPTLYVDSWNPHHAPFFSAVGSSIAMTLWAFLGLESACANTDVVENPERNVPIAVLGGTLGAAVIYIVSTNVIAGIVPNMELANSTAPFGLAFAQMFTPEVGKVIMALMVMSCCGSLLGWQFTIAQVFKSSSDEGYFPKIFSRVTKVDAPVQGMLTIVIIQSGLALMTISPSLNSQFNVLVNLAVVTNIIPYILSMAALVIIQKVANVPPSKAKVANFVAFVGAMYSFYALYSSGEEAMLYGSIVTFLGWTLYGLVSPRFELKNKHG</sequence>
<name>POTE_ECOL6</name>
<reference key="1">
    <citation type="journal article" date="2002" name="Proc. Natl. Acad. Sci. U.S.A.">
        <title>Extensive mosaic structure revealed by the complete genome sequence of uropathogenic Escherichia coli.</title>
        <authorList>
            <person name="Welch R.A."/>
            <person name="Burland V."/>
            <person name="Plunkett G. III"/>
            <person name="Redford P."/>
            <person name="Roesch P."/>
            <person name="Rasko D."/>
            <person name="Buckles E.L."/>
            <person name="Liou S.-R."/>
            <person name="Boutin A."/>
            <person name="Hackett J."/>
            <person name="Stroud D."/>
            <person name="Mayhew G.F."/>
            <person name="Rose D.J."/>
            <person name="Zhou S."/>
            <person name="Schwartz D.C."/>
            <person name="Perna N.T."/>
            <person name="Mobley H.L.T."/>
            <person name="Donnenberg M.S."/>
            <person name="Blattner F.R."/>
        </authorList>
    </citation>
    <scope>NUCLEOTIDE SEQUENCE [LARGE SCALE GENOMIC DNA]</scope>
    <source>
        <strain>CFT073 / ATCC 700928 / UPEC</strain>
    </source>
</reference>
<proteinExistence type="inferred from homology"/>
<organism>
    <name type="scientific">Escherichia coli O6:H1 (strain CFT073 / ATCC 700928 / UPEC)</name>
    <dbReference type="NCBI Taxonomy" id="199310"/>
    <lineage>
        <taxon>Bacteria</taxon>
        <taxon>Pseudomonadati</taxon>
        <taxon>Pseudomonadota</taxon>
        <taxon>Gammaproteobacteria</taxon>
        <taxon>Enterobacterales</taxon>
        <taxon>Enterobacteriaceae</taxon>
        <taxon>Escherichia</taxon>
    </lineage>
</organism>
<evidence type="ECO:0000255" key="1">
    <source>
        <dbReference type="HAMAP-Rule" id="MF_02073"/>
    </source>
</evidence>
<dbReference type="EMBL" id="AE014075">
    <property type="protein sequence ID" value="AAN79249.1"/>
    <property type="molecule type" value="Genomic_DNA"/>
</dbReference>
<dbReference type="RefSeq" id="WP_000075845.1">
    <property type="nucleotide sequence ID" value="NZ_CP051263.1"/>
</dbReference>
<dbReference type="SMR" id="P0AAF2"/>
<dbReference type="STRING" id="199310.c0776"/>
<dbReference type="GeneID" id="93776795"/>
<dbReference type="KEGG" id="ecc:c0776"/>
<dbReference type="eggNOG" id="COG0531">
    <property type="taxonomic scope" value="Bacteria"/>
</dbReference>
<dbReference type="HOGENOM" id="CLU_007946_1_0_6"/>
<dbReference type="BioCyc" id="ECOL199310:C0776-MONOMER"/>
<dbReference type="Proteomes" id="UP000001410">
    <property type="component" value="Chromosome"/>
</dbReference>
<dbReference type="GO" id="GO:0005886">
    <property type="term" value="C:plasma membrane"/>
    <property type="evidence" value="ECO:0007669"/>
    <property type="project" value="UniProtKB-SubCell"/>
</dbReference>
<dbReference type="GO" id="GO:0015496">
    <property type="term" value="F:putrescine:ornithine antiporter activity"/>
    <property type="evidence" value="ECO:0007669"/>
    <property type="project" value="InterPro"/>
</dbReference>
<dbReference type="GO" id="GO:0015293">
    <property type="term" value="F:symporter activity"/>
    <property type="evidence" value="ECO:0007669"/>
    <property type="project" value="UniProtKB-KW"/>
</dbReference>
<dbReference type="FunFam" id="1.20.1740.10:FF:000014">
    <property type="entry name" value="Putrescine transporter PotE"/>
    <property type="match status" value="1"/>
</dbReference>
<dbReference type="Gene3D" id="1.20.1740.10">
    <property type="entry name" value="Amino acid/polyamine transporter I"/>
    <property type="match status" value="1"/>
</dbReference>
<dbReference type="HAMAP" id="MF_02073">
    <property type="entry name" value="Putrescine_transp"/>
    <property type="match status" value="1"/>
</dbReference>
<dbReference type="InterPro" id="IPR002293">
    <property type="entry name" value="AA/rel_permease1"/>
</dbReference>
<dbReference type="InterPro" id="IPR004754">
    <property type="entry name" value="Amino_acid_antiprt"/>
</dbReference>
<dbReference type="InterPro" id="IPR050367">
    <property type="entry name" value="APC_superfamily"/>
</dbReference>
<dbReference type="InterPro" id="IPR027566">
    <property type="entry name" value="Symport/antiport_PotE"/>
</dbReference>
<dbReference type="NCBIfam" id="TIGR00905">
    <property type="entry name" value="2A0302"/>
    <property type="match status" value="1"/>
</dbReference>
<dbReference type="NCBIfam" id="TIGR04299">
    <property type="entry name" value="antiport_PotE"/>
    <property type="match status" value="1"/>
</dbReference>
<dbReference type="NCBIfam" id="NF007938">
    <property type="entry name" value="PRK10655.1"/>
    <property type="match status" value="1"/>
</dbReference>
<dbReference type="PANTHER" id="PTHR42770">
    <property type="entry name" value="AMINO ACID TRANSPORTER-RELATED"/>
    <property type="match status" value="1"/>
</dbReference>
<dbReference type="PANTHER" id="PTHR42770:SF6">
    <property type="entry name" value="PUTRESCINE TRANSPORTER POTE"/>
    <property type="match status" value="1"/>
</dbReference>
<dbReference type="Pfam" id="PF13520">
    <property type="entry name" value="AA_permease_2"/>
    <property type="match status" value="1"/>
</dbReference>
<dbReference type="PIRSF" id="PIRSF006060">
    <property type="entry name" value="AA_transporter"/>
    <property type="match status" value="1"/>
</dbReference>
<comment type="function">
    <text evidence="1">Catalyzes both the uptake and excretion of putrescine. The uptake of putrescine is dependent on the membrane potential and the excretion involves putrescine-ornithine antiporter activity.</text>
</comment>
<comment type="catalytic activity">
    <reaction evidence="1">
        <text>putrescine(in) + H(+)(in) = putrescine(out) + H(+)(out)</text>
        <dbReference type="Rhea" id="RHEA:28891"/>
        <dbReference type="ChEBI" id="CHEBI:15378"/>
        <dbReference type="ChEBI" id="CHEBI:326268"/>
    </reaction>
    <physiologicalReaction direction="right-to-left" evidence="1">
        <dbReference type="Rhea" id="RHEA:28893"/>
    </physiologicalReaction>
</comment>
<comment type="catalytic activity">
    <reaction evidence="1">
        <text>putrescine(in) + L-ornithine(out) = putrescine(out) + L-ornithine(in)</text>
        <dbReference type="Rhea" id="RHEA:28827"/>
        <dbReference type="ChEBI" id="CHEBI:46911"/>
        <dbReference type="ChEBI" id="CHEBI:326268"/>
    </reaction>
    <physiologicalReaction direction="left-to-right" evidence="1">
        <dbReference type="Rhea" id="RHEA:28828"/>
    </physiologicalReaction>
</comment>
<comment type="subcellular location">
    <subcellularLocation>
        <location evidence="1">Cell inner membrane</location>
        <topology evidence="1">Multi-pass membrane protein</topology>
    </subcellularLocation>
</comment>
<comment type="similarity">
    <text evidence="1">Belongs to the amino acid-polyamine-organocation (APC) superfamily. Basic amino acid/polyamine antiporter (APA) (TC 2.A.3.2) family.</text>
</comment>